<sequence>MGKAKFERGKPHVNIGTIGHIDHGKTTLTAAITKIAGLAGNGDYVAFDEIDKAPEEKERGITIATAHVEYETEARHYAHVDCPGHADYIKNMITGAAQMDGAILVVAATDGPMPQTREHILLARQVGVPGIVVFLNKCDMVDDEELLELVEMEVRELLSSYDFPGDDLPVIQGSALKALECESADEDAAKPILDLLAACDSYIEEPERDIDKPFLMPIEDVFSISGRGTVVTGRVERGVIKVGEEVEIVGIRDTAKTTCTGVEMFRKLLDQGQAGDNVGVLLRGTKRDEVERGQVLSAPGSINPHTKFKAEVYVLSKDEGGRHTPFFSGYRPQFYFRTTDITGVVTLDEGVEMVMPGDNATFNVEMINPIAMDPGLRFAIREGGRTVGAGVVTEILE</sequence>
<organism>
    <name type="scientific">Maridesulfovibrio salexigens (strain ATCC 14822 / DSM 2638 / NCIMB 8403 / VKM B-1763)</name>
    <name type="common">Desulfovibrio salexigens</name>
    <dbReference type="NCBI Taxonomy" id="526222"/>
    <lineage>
        <taxon>Bacteria</taxon>
        <taxon>Pseudomonadati</taxon>
        <taxon>Thermodesulfobacteriota</taxon>
        <taxon>Desulfovibrionia</taxon>
        <taxon>Desulfovibrionales</taxon>
        <taxon>Desulfovibrionaceae</taxon>
        <taxon>Maridesulfovibrio</taxon>
    </lineage>
</organism>
<keyword id="KW-0963">Cytoplasm</keyword>
<keyword id="KW-0251">Elongation factor</keyword>
<keyword id="KW-0342">GTP-binding</keyword>
<keyword id="KW-0378">Hydrolase</keyword>
<keyword id="KW-0460">Magnesium</keyword>
<keyword id="KW-0479">Metal-binding</keyword>
<keyword id="KW-0547">Nucleotide-binding</keyword>
<keyword id="KW-0648">Protein biosynthesis</keyword>
<keyword id="KW-1185">Reference proteome</keyword>
<comment type="function">
    <text evidence="2">GTP hydrolase that promotes the GTP-dependent binding of aminoacyl-tRNA to the A-site of ribosomes during protein biosynthesis.</text>
</comment>
<comment type="catalytic activity">
    <reaction evidence="2">
        <text>GTP + H2O = GDP + phosphate + H(+)</text>
        <dbReference type="Rhea" id="RHEA:19669"/>
        <dbReference type="ChEBI" id="CHEBI:15377"/>
        <dbReference type="ChEBI" id="CHEBI:15378"/>
        <dbReference type="ChEBI" id="CHEBI:37565"/>
        <dbReference type="ChEBI" id="CHEBI:43474"/>
        <dbReference type="ChEBI" id="CHEBI:58189"/>
        <dbReference type="EC" id="3.6.5.3"/>
    </reaction>
    <physiologicalReaction direction="left-to-right" evidence="2">
        <dbReference type="Rhea" id="RHEA:19670"/>
    </physiologicalReaction>
</comment>
<comment type="subunit">
    <text evidence="2">Monomer.</text>
</comment>
<comment type="subcellular location">
    <subcellularLocation>
        <location evidence="2">Cytoplasm</location>
    </subcellularLocation>
</comment>
<comment type="similarity">
    <text evidence="2">Belongs to the TRAFAC class translation factor GTPase superfamily. Classic translation factor GTPase family. EF-Tu/EF-1A subfamily.</text>
</comment>
<reference key="1">
    <citation type="submission" date="2009-06" db="EMBL/GenBank/DDBJ databases">
        <title>Complete sequence of Desulfovibrio salexigens DSM 2638.</title>
        <authorList>
            <consortium name="US DOE Joint Genome Institute"/>
            <person name="Lucas S."/>
            <person name="Copeland A."/>
            <person name="Lapidus A."/>
            <person name="Glavina del Rio T."/>
            <person name="Tice H."/>
            <person name="Bruce D."/>
            <person name="Goodwin L."/>
            <person name="Pitluck S."/>
            <person name="Munk A.C."/>
            <person name="Brettin T."/>
            <person name="Detter J.C."/>
            <person name="Han C."/>
            <person name="Tapia R."/>
            <person name="Larimer F."/>
            <person name="Land M."/>
            <person name="Hauser L."/>
            <person name="Kyrpides N."/>
            <person name="Anderson I."/>
            <person name="Wall J.D."/>
            <person name="Arkin A.P."/>
            <person name="Dehal P."/>
            <person name="Chivian D."/>
            <person name="Giles B."/>
            <person name="Hazen T.C."/>
        </authorList>
    </citation>
    <scope>NUCLEOTIDE SEQUENCE [LARGE SCALE GENOMIC DNA]</scope>
    <source>
        <strain>ATCC 14822 / DSM 2638 / NCIMB 8403 / VKM B-1763</strain>
    </source>
</reference>
<feature type="chain" id="PRO_1000203006" description="Elongation factor Tu">
    <location>
        <begin position="1"/>
        <end position="397"/>
    </location>
</feature>
<feature type="domain" description="tr-type G">
    <location>
        <begin position="10"/>
        <end position="207"/>
    </location>
</feature>
<feature type="region of interest" description="G1" evidence="1">
    <location>
        <begin position="19"/>
        <end position="26"/>
    </location>
</feature>
<feature type="region of interest" description="G2" evidence="1">
    <location>
        <begin position="60"/>
        <end position="64"/>
    </location>
</feature>
<feature type="region of interest" description="G3" evidence="1">
    <location>
        <begin position="81"/>
        <end position="84"/>
    </location>
</feature>
<feature type="region of interest" description="G4" evidence="1">
    <location>
        <begin position="136"/>
        <end position="139"/>
    </location>
</feature>
<feature type="region of interest" description="G5" evidence="1">
    <location>
        <begin position="174"/>
        <end position="176"/>
    </location>
</feature>
<feature type="binding site" evidence="2">
    <location>
        <begin position="19"/>
        <end position="26"/>
    </location>
    <ligand>
        <name>GTP</name>
        <dbReference type="ChEBI" id="CHEBI:37565"/>
    </ligand>
</feature>
<feature type="binding site" evidence="2">
    <location>
        <position position="26"/>
    </location>
    <ligand>
        <name>Mg(2+)</name>
        <dbReference type="ChEBI" id="CHEBI:18420"/>
    </ligand>
</feature>
<feature type="binding site" evidence="2">
    <location>
        <begin position="81"/>
        <end position="85"/>
    </location>
    <ligand>
        <name>GTP</name>
        <dbReference type="ChEBI" id="CHEBI:37565"/>
    </ligand>
</feature>
<feature type="binding site" evidence="2">
    <location>
        <begin position="136"/>
        <end position="139"/>
    </location>
    <ligand>
        <name>GTP</name>
        <dbReference type="ChEBI" id="CHEBI:37565"/>
    </ligand>
</feature>
<name>EFTU_MARSD</name>
<evidence type="ECO:0000250" key="1"/>
<evidence type="ECO:0000255" key="2">
    <source>
        <dbReference type="HAMAP-Rule" id="MF_00118"/>
    </source>
</evidence>
<proteinExistence type="inferred from homology"/>
<dbReference type="EC" id="3.6.5.3" evidence="2"/>
<dbReference type="EMBL" id="CP001649">
    <property type="protein sequence ID" value="ACS79234.1"/>
    <property type="molecule type" value="Genomic_DNA"/>
</dbReference>
<dbReference type="RefSeq" id="WP_015851053.1">
    <property type="nucleotide sequence ID" value="NC_012881.1"/>
</dbReference>
<dbReference type="SMR" id="C6C171"/>
<dbReference type="STRING" id="526222.Desal_1171"/>
<dbReference type="KEGG" id="dsa:Desal_1171"/>
<dbReference type="eggNOG" id="COG0050">
    <property type="taxonomic scope" value="Bacteria"/>
</dbReference>
<dbReference type="HOGENOM" id="CLU_007265_0_0_7"/>
<dbReference type="OrthoDB" id="9803139at2"/>
<dbReference type="Proteomes" id="UP000002601">
    <property type="component" value="Chromosome"/>
</dbReference>
<dbReference type="GO" id="GO:0005829">
    <property type="term" value="C:cytosol"/>
    <property type="evidence" value="ECO:0007669"/>
    <property type="project" value="TreeGrafter"/>
</dbReference>
<dbReference type="GO" id="GO:0005525">
    <property type="term" value="F:GTP binding"/>
    <property type="evidence" value="ECO:0007669"/>
    <property type="project" value="UniProtKB-UniRule"/>
</dbReference>
<dbReference type="GO" id="GO:0003924">
    <property type="term" value="F:GTPase activity"/>
    <property type="evidence" value="ECO:0007669"/>
    <property type="project" value="InterPro"/>
</dbReference>
<dbReference type="GO" id="GO:0003746">
    <property type="term" value="F:translation elongation factor activity"/>
    <property type="evidence" value="ECO:0007669"/>
    <property type="project" value="UniProtKB-UniRule"/>
</dbReference>
<dbReference type="CDD" id="cd01884">
    <property type="entry name" value="EF_Tu"/>
    <property type="match status" value="1"/>
</dbReference>
<dbReference type="CDD" id="cd03697">
    <property type="entry name" value="EFTU_II"/>
    <property type="match status" value="1"/>
</dbReference>
<dbReference type="CDD" id="cd03707">
    <property type="entry name" value="EFTU_III"/>
    <property type="match status" value="1"/>
</dbReference>
<dbReference type="FunFam" id="2.40.30.10:FF:000001">
    <property type="entry name" value="Elongation factor Tu"/>
    <property type="match status" value="1"/>
</dbReference>
<dbReference type="FunFam" id="3.40.50.300:FF:000003">
    <property type="entry name" value="Elongation factor Tu"/>
    <property type="match status" value="1"/>
</dbReference>
<dbReference type="Gene3D" id="3.40.50.300">
    <property type="entry name" value="P-loop containing nucleotide triphosphate hydrolases"/>
    <property type="match status" value="1"/>
</dbReference>
<dbReference type="Gene3D" id="2.40.30.10">
    <property type="entry name" value="Translation factors"/>
    <property type="match status" value="2"/>
</dbReference>
<dbReference type="HAMAP" id="MF_00118_B">
    <property type="entry name" value="EF_Tu_B"/>
    <property type="match status" value="1"/>
</dbReference>
<dbReference type="InterPro" id="IPR041709">
    <property type="entry name" value="EF-Tu_GTP-bd"/>
</dbReference>
<dbReference type="InterPro" id="IPR050055">
    <property type="entry name" value="EF-Tu_GTPase"/>
</dbReference>
<dbReference type="InterPro" id="IPR004161">
    <property type="entry name" value="EFTu-like_2"/>
</dbReference>
<dbReference type="InterPro" id="IPR033720">
    <property type="entry name" value="EFTU_2"/>
</dbReference>
<dbReference type="InterPro" id="IPR031157">
    <property type="entry name" value="G_TR_CS"/>
</dbReference>
<dbReference type="InterPro" id="IPR027417">
    <property type="entry name" value="P-loop_NTPase"/>
</dbReference>
<dbReference type="InterPro" id="IPR005225">
    <property type="entry name" value="Small_GTP-bd"/>
</dbReference>
<dbReference type="InterPro" id="IPR000795">
    <property type="entry name" value="T_Tr_GTP-bd_dom"/>
</dbReference>
<dbReference type="InterPro" id="IPR009000">
    <property type="entry name" value="Transl_B-barrel_sf"/>
</dbReference>
<dbReference type="InterPro" id="IPR009001">
    <property type="entry name" value="Transl_elong_EF1A/Init_IF2_C"/>
</dbReference>
<dbReference type="InterPro" id="IPR004541">
    <property type="entry name" value="Transl_elong_EFTu/EF1A_bac/org"/>
</dbReference>
<dbReference type="InterPro" id="IPR004160">
    <property type="entry name" value="Transl_elong_EFTu/EF1A_C"/>
</dbReference>
<dbReference type="NCBIfam" id="TIGR00485">
    <property type="entry name" value="EF-Tu"/>
    <property type="match status" value="1"/>
</dbReference>
<dbReference type="NCBIfam" id="NF000766">
    <property type="entry name" value="PRK00049.1"/>
    <property type="match status" value="1"/>
</dbReference>
<dbReference type="NCBIfam" id="NF009372">
    <property type="entry name" value="PRK12735.1"/>
    <property type="match status" value="1"/>
</dbReference>
<dbReference type="NCBIfam" id="NF009373">
    <property type="entry name" value="PRK12736.1"/>
    <property type="match status" value="1"/>
</dbReference>
<dbReference type="NCBIfam" id="TIGR00231">
    <property type="entry name" value="small_GTP"/>
    <property type="match status" value="1"/>
</dbReference>
<dbReference type="PANTHER" id="PTHR43721:SF22">
    <property type="entry name" value="ELONGATION FACTOR TU, MITOCHONDRIAL"/>
    <property type="match status" value="1"/>
</dbReference>
<dbReference type="PANTHER" id="PTHR43721">
    <property type="entry name" value="ELONGATION FACTOR TU-RELATED"/>
    <property type="match status" value="1"/>
</dbReference>
<dbReference type="Pfam" id="PF00009">
    <property type="entry name" value="GTP_EFTU"/>
    <property type="match status" value="1"/>
</dbReference>
<dbReference type="Pfam" id="PF03144">
    <property type="entry name" value="GTP_EFTU_D2"/>
    <property type="match status" value="1"/>
</dbReference>
<dbReference type="Pfam" id="PF03143">
    <property type="entry name" value="GTP_EFTU_D3"/>
    <property type="match status" value="1"/>
</dbReference>
<dbReference type="PRINTS" id="PR00315">
    <property type="entry name" value="ELONGATNFCT"/>
</dbReference>
<dbReference type="SUPFAM" id="SSF50465">
    <property type="entry name" value="EF-Tu/eEF-1alpha/eIF2-gamma C-terminal domain"/>
    <property type="match status" value="1"/>
</dbReference>
<dbReference type="SUPFAM" id="SSF52540">
    <property type="entry name" value="P-loop containing nucleoside triphosphate hydrolases"/>
    <property type="match status" value="1"/>
</dbReference>
<dbReference type="SUPFAM" id="SSF50447">
    <property type="entry name" value="Translation proteins"/>
    <property type="match status" value="1"/>
</dbReference>
<dbReference type="PROSITE" id="PS00301">
    <property type="entry name" value="G_TR_1"/>
    <property type="match status" value="1"/>
</dbReference>
<dbReference type="PROSITE" id="PS51722">
    <property type="entry name" value="G_TR_2"/>
    <property type="match status" value="1"/>
</dbReference>
<protein>
    <recommendedName>
        <fullName evidence="2">Elongation factor Tu</fullName>
        <shortName evidence="2">EF-Tu</shortName>
        <ecNumber evidence="2">3.6.5.3</ecNumber>
    </recommendedName>
</protein>
<gene>
    <name evidence="2" type="primary">tuf</name>
    <name type="ordered locus">Desal_1171</name>
</gene>
<accession>C6C171</accession>